<proteinExistence type="inferred from homology"/>
<sequence length="135" mass="15294">MRNMMSLCWQYLRAFTIIYLCLWAGKALALLLPIVIPGSIIGMLILFVLLTLQILPSPWVKPSCQLLIRYMALLFVPIGVGVMQYYEQLTKQFGPIVVSCFISTLIVMLVVAYSSHYVHRDRKVISPSTPTEGEK</sequence>
<keyword id="KW-0997">Cell inner membrane</keyword>
<keyword id="KW-1003">Cell membrane</keyword>
<keyword id="KW-0472">Membrane</keyword>
<keyword id="KW-0812">Transmembrane</keyword>
<keyword id="KW-1133">Transmembrane helix</keyword>
<organism>
    <name type="scientific">Yersinia pseudotuberculosis serotype O:3 (strain YPIII)</name>
    <dbReference type="NCBI Taxonomy" id="502800"/>
    <lineage>
        <taxon>Bacteria</taxon>
        <taxon>Pseudomonadati</taxon>
        <taxon>Pseudomonadota</taxon>
        <taxon>Gammaproteobacteria</taxon>
        <taxon>Enterobacterales</taxon>
        <taxon>Yersiniaceae</taxon>
        <taxon>Yersinia</taxon>
    </lineage>
</organism>
<protein>
    <recommendedName>
        <fullName evidence="1">UPF0299 membrane protein YPK_2559</fullName>
    </recommendedName>
</protein>
<gene>
    <name type="ordered locus">YPK_2559</name>
</gene>
<evidence type="ECO:0000255" key="1">
    <source>
        <dbReference type="HAMAP-Rule" id="MF_01144"/>
    </source>
</evidence>
<dbReference type="EMBL" id="CP000950">
    <property type="protein sequence ID" value="ACA68836.1"/>
    <property type="molecule type" value="Genomic_DNA"/>
</dbReference>
<dbReference type="RefSeq" id="WP_002211971.1">
    <property type="nucleotide sequence ID" value="NZ_CP009792.1"/>
</dbReference>
<dbReference type="SMR" id="B1JPZ3"/>
<dbReference type="KEGG" id="ypy:YPK_2559"/>
<dbReference type="PATRIC" id="fig|502800.11.peg.3255"/>
<dbReference type="GO" id="GO:0005886">
    <property type="term" value="C:plasma membrane"/>
    <property type="evidence" value="ECO:0007669"/>
    <property type="project" value="UniProtKB-SubCell"/>
</dbReference>
<dbReference type="HAMAP" id="MF_01144">
    <property type="entry name" value="UPF0299"/>
    <property type="match status" value="1"/>
</dbReference>
<dbReference type="InterPro" id="IPR005538">
    <property type="entry name" value="LrgA/CidA"/>
</dbReference>
<dbReference type="InterPro" id="IPR022957">
    <property type="entry name" value="Uncharacterised_UPF0299"/>
</dbReference>
<dbReference type="NCBIfam" id="NF002494">
    <property type="entry name" value="PRK01821.1"/>
    <property type="match status" value="1"/>
</dbReference>
<dbReference type="PANTHER" id="PTHR33931">
    <property type="entry name" value="HOLIN-LIKE PROTEIN CIDA-RELATED"/>
    <property type="match status" value="1"/>
</dbReference>
<dbReference type="PANTHER" id="PTHR33931:SF5">
    <property type="entry name" value="UPF0299 MEMBRANE PROTEIN YOHJ"/>
    <property type="match status" value="1"/>
</dbReference>
<dbReference type="Pfam" id="PF03788">
    <property type="entry name" value="LrgA"/>
    <property type="match status" value="1"/>
</dbReference>
<comment type="subcellular location">
    <subcellularLocation>
        <location evidence="1">Cell inner membrane</location>
        <topology evidence="1">Multi-pass membrane protein</topology>
    </subcellularLocation>
</comment>
<comment type="similarity">
    <text evidence="1">Belongs to the UPF0299 family.</text>
</comment>
<feature type="chain" id="PRO_1000137378" description="UPF0299 membrane protein YPK_2559">
    <location>
        <begin position="1"/>
        <end position="135"/>
    </location>
</feature>
<feature type="transmembrane region" description="Helical" evidence="1">
    <location>
        <begin position="30"/>
        <end position="50"/>
    </location>
</feature>
<feature type="transmembrane region" description="Helical" evidence="1">
    <location>
        <begin position="66"/>
        <end position="86"/>
    </location>
</feature>
<feature type="transmembrane region" description="Helical" evidence="1">
    <location>
        <begin position="93"/>
        <end position="113"/>
    </location>
</feature>
<reference key="1">
    <citation type="submission" date="2008-02" db="EMBL/GenBank/DDBJ databases">
        <title>Complete sequence of Yersinia pseudotuberculosis YPIII.</title>
        <authorList>
            <consortium name="US DOE Joint Genome Institute"/>
            <person name="Copeland A."/>
            <person name="Lucas S."/>
            <person name="Lapidus A."/>
            <person name="Glavina del Rio T."/>
            <person name="Dalin E."/>
            <person name="Tice H."/>
            <person name="Bruce D."/>
            <person name="Goodwin L."/>
            <person name="Pitluck S."/>
            <person name="Munk A.C."/>
            <person name="Brettin T."/>
            <person name="Detter J.C."/>
            <person name="Han C."/>
            <person name="Tapia R."/>
            <person name="Schmutz J."/>
            <person name="Larimer F."/>
            <person name="Land M."/>
            <person name="Hauser L."/>
            <person name="Challacombe J.F."/>
            <person name="Green L."/>
            <person name="Lindler L.E."/>
            <person name="Nikolich M.P."/>
            <person name="Richardson P."/>
        </authorList>
    </citation>
    <scope>NUCLEOTIDE SEQUENCE [LARGE SCALE GENOMIC DNA]</scope>
    <source>
        <strain>YPIII</strain>
    </source>
</reference>
<name>Y2559_YERPY</name>
<accession>B1JPZ3</accession>